<protein>
    <recommendedName>
        <fullName evidence="4">NAD-dependent glycerol dehydrogenase</fullName>
        <ecNumber evidence="3">1.1.1.6</ecNumber>
    </recommendedName>
    <alternativeName>
        <fullName evidence="4">Dha-forming NAD-dependent glycerol dehydrogenase</fullName>
    </alternativeName>
</protein>
<name>GOLD_LISIN</name>
<sequence length="254" mass="27262">MTFKGFDKDFNITDKVAVVTGAASGIGKAMAELFSEKGAYVVLLDIKEDVKDVAAQINPSRTLALQVDITKKENIEKVVAEIKKVYPKIDILANSAGVALLEKAEDLPEEYWDKTMELNLKGSFLMAQIIGREMIATGGGKIVNMASQASVIALDKHVAYCASKAAIVSMTQVLAMEWAPYNINVNAISPTVILTELGKKAWAGQVGEDMKKLIPAGRFGYPEEVAACALFLVSDAASLITGENLIIDGGYTIK</sequence>
<keyword id="KW-0963">Cytoplasm</keyword>
<keyword id="KW-0319">Glycerol metabolism</keyword>
<keyword id="KW-0460">Magnesium</keyword>
<keyword id="KW-0464">Manganese</keyword>
<keyword id="KW-0520">NAD</keyword>
<keyword id="KW-0560">Oxidoreductase</keyword>
<feature type="chain" id="PRO_0000439493" description="NAD-dependent glycerol dehydrogenase">
    <location>
        <begin position="1"/>
        <end position="254"/>
    </location>
</feature>
<feature type="active site" description="Proton acceptor" evidence="2">
    <location>
        <position position="160"/>
    </location>
</feature>
<feature type="binding site" evidence="1">
    <location>
        <begin position="18"/>
        <end position="47"/>
    </location>
    <ligand>
        <name>NAD(+)</name>
        <dbReference type="ChEBI" id="CHEBI:57540"/>
    </ligand>
</feature>
<feature type="binding site" evidence="1">
    <location>
        <position position="164"/>
    </location>
    <ligand>
        <name>NAD(+)</name>
        <dbReference type="ChEBI" id="CHEBI:57540"/>
    </ligand>
</feature>
<organism>
    <name type="scientific">Listeria innocua serovar 6a (strain ATCC BAA-680 / CLIP 11262)</name>
    <dbReference type="NCBI Taxonomy" id="272626"/>
    <lineage>
        <taxon>Bacteria</taxon>
        <taxon>Bacillati</taxon>
        <taxon>Bacillota</taxon>
        <taxon>Bacilli</taxon>
        <taxon>Bacillales</taxon>
        <taxon>Listeriaceae</taxon>
        <taxon>Listeria</taxon>
    </lineage>
</organism>
<reference key="1">
    <citation type="journal article" date="2001" name="Science">
        <title>Comparative genomics of Listeria species.</title>
        <authorList>
            <person name="Glaser P."/>
            <person name="Frangeul L."/>
            <person name="Buchrieser C."/>
            <person name="Rusniok C."/>
            <person name="Amend A."/>
            <person name="Baquero F."/>
            <person name="Berche P."/>
            <person name="Bloecker H."/>
            <person name="Brandt P."/>
            <person name="Chakraborty T."/>
            <person name="Charbit A."/>
            <person name="Chetouani F."/>
            <person name="Couve E."/>
            <person name="de Daruvar A."/>
            <person name="Dehoux P."/>
            <person name="Domann E."/>
            <person name="Dominguez-Bernal G."/>
            <person name="Duchaud E."/>
            <person name="Durant L."/>
            <person name="Dussurget O."/>
            <person name="Entian K.-D."/>
            <person name="Fsihi H."/>
            <person name="Garcia-del Portillo F."/>
            <person name="Garrido P."/>
            <person name="Gautier L."/>
            <person name="Goebel W."/>
            <person name="Gomez-Lopez N."/>
            <person name="Hain T."/>
            <person name="Hauf J."/>
            <person name="Jackson D."/>
            <person name="Jones L.-M."/>
            <person name="Kaerst U."/>
            <person name="Kreft J."/>
            <person name="Kuhn M."/>
            <person name="Kunst F."/>
            <person name="Kurapkat G."/>
            <person name="Madueno E."/>
            <person name="Maitournam A."/>
            <person name="Mata Vicente J."/>
            <person name="Ng E."/>
            <person name="Nedjari H."/>
            <person name="Nordsiek G."/>
            <person name="Novella S."/>
            <person name="de Pablos B."/>
            <person name="Perez-Diaz J.-C."/>
            <person name="Purcell R."/>
            <person name="Remmel B."/>
            <person name="Rose M."/>
            <person name="Schlueter T."/>
            <person name="Simoes N."/>
            <person name="Tierrez A."/>
            <person name="Vazquez-Boland J.-A."/>
            <person name="Voss H."/>
            <person name="Wehland J."/>
            <person name="Cossart P."/>
        </authorList>
    </citation>
    <scope>NUCLEOTIDE SEQUENCE [LARGE SCALE GENOMIC DNA]</scope>
    <source>
        <strain>ATCC BAA-680 / CLIP 11262</strain>
    </source>
</reference>
<reference key="2">
    <citation type="journal article" date="2012" name="J. Bacteriol.">
        <title>Novel listerial glycerol dehydrogenase- and phosphoenolpyruvate-dependent dihydroxyacetone kinase system connected to the pentose phosphate pathway.</title>
        <authorList>
            <person name="Monniot C."/>
            <person name="Zebre A.C."/>
            <person name="Ake F.M."/>
            <person name="Deutscher J."/>
            <person name="Milohanic E."/>
        </authorList>
    </citation>
    <scope>FUNCTION</scope>
    <scope>CATALYTIC ACTIVITY</scope>
    <scope>SUBCELLULAR LOCATION</scope>
    <scope>COFACTOR</scope>
    <scope>ACTIVITY REGULATION</scope>
    <scope>INDUCTION</scope>
    <scope>SUBSTRATE SPECIFICITY</scope>
    <source>
        <strain>ATCC BAA-680 / CLIP 11262</strain>
    </source>
</reference>
<comment type="function">
    <text evidence="3">Involved in the glycerol metabolism. Catalyzes the NAD-dependent oxidation of glycerol to dihydroxyacetone (glycerone). GolD specifically uses NAD.</text>
</comment>
<comment type="catalytic activity">
    <reaction evidence="3">
        <text>glycerol + NAD(+) = dihydroxyacetone + NADH + H(+)</text>
        <dbReference type="Rhea" id="RHEA:13769"/>
        <dbReference type="ChEBI" id="CHEBI:15378"/>
        <dbReference type="ChEBI" id="CHEBI:16016"/>
        <dbReference type="ChEBI" id="CHEBI:17754"/>
        <dbReference type="ChEBI" id="CHEBI:57540"/>
        <dbReference type="ChEBI" id="CHEBI:57945"/>
        <dbReference type="EC" id="1.1.1.6"/>
    </reaction>
</comment>
<comment type="cofactor">
    <cofactor evidence="3">
        <name>Mg(2+)</name>
        <dbReference type="ChEBI" id="CHEBI:18420"/>
    </cofactor>
    <cofactor evidence="3">
        <name>Mn(2+)</name>
        <dbReference type="ChEBI" id="CHEBI:29035"/>
    </cofactor>
</comment>
<comment type="activity regulation">
    <text evidence="3">Inhibited by Zn(2+).</text>
</comment>
<comment type="subcellular location">
    <subcellularLocation>
        <location evidence="6">Cytoplasm</location>
    </subcellularLocation>
</comment>
<comment type="induction">
    <text evidence="3">Repressed by GolR.</text>
</comment>
<comment type="similarity">
    <text evidence="5">Belongs to the short-chain dehydrogenases/reductases (SDR) family.</text>
</comment>
<dbReference type="EC" id="1.1.1.6" evidence="3"/>
<dbReference type="EMBL" id="AL596164">
    <property type="protein sequence ID" value="CAC95595.1"/>
    <property type="molecule type" value="Genomic_DNA"/>
</dbReference>
<dbReference type="PIR" id="AC1478">
    <property type="entry name" value="AC1478"/>
</dbReference>
<dbReference type="RefSeq" id="WP_003765224.1">
    <property type="nucleotide sequence ID" value="NC_003212.1"/>
</dbReference>
<dbReference type="SMR" id="Q92EU6"/>
<dbReference type="STRING" id="272626.gene:17564689"/>
<dbReference type="KEGG" id="lin:lin0362"/>
<dbReference type="eggNOG" id="COG1028">
    <property type="taxonomic scope" value="Bacteria"/>
</dbReference>
<dbReference type="HOGENOM" id="CLU_010194_1_1_9"/>
<dbReference type="OrthoDB" id="9803333at2"/>
<dbReference type="Proteomes" id="UP000002513">
    <property type="component" value="Chromosome"/>
</dbReference>
<dbReference type="GO" id="GO:0005737">
    <property type="term" value="C:cytoplasm"/>
    <property type="evidence" value="ECO:0007669"/>
    <property type="project" value="UniProtKB-SubCell"/>
</dbReference>
<dbReference type="GO" id="GO:0008888">
    <property type="term" value="F:glycerol dehydrogenase (NAD+) activity"/>
    <property type="evidence" value="ECO:0000314"/>
    <property type="project" value="UniProtKB"/>
</dbReference>
<dbReference type="GO" id="GO:0000287">
    <property type="term" value="F:magnesium ion binding"/>
    <property type="evidence" value="ECO:0000314"/>
    <property type="project" value="UniProtKB"/>
</dbReference>
<dbReference type="GO" id="GO:0030145">
    <property type="term" value="F:manganese ion binding"/>
    <property type="evidence" value="ECO:0000314"/>
    <property type="project" value="UniProtKB"/>
</dbReference>
<dbReference type="GO" id="GO:0019563">
    <property type="term" value="P:glycerol catabolic process"/>
    <property type="evidence" value="ECO:0000314"/>
    <property type="project" value="UniProtKB"/>
</dbReference>
<dbReference type="CDD" id="cd05233">
    <property type="entry name" value="SDR_c"/>
    <property type="match status" value="1"/>
</dbReference>
<dbReference type="FunFam" id="3.40.50.720:FF:000509">
    <property type="entry name" value="Short chain dehydrogenase"/>
    <property type="match status" value="1"/>
</dbReference>
<dbReference type="Gene3D" id="3.40.50.720">
    <property type="entry name" value="NAD(P)-binding Rossmann-like Domain"/>
    <property type="match status" value="1"/>
</dbReference>
<dbReference type="InterPro" id="IPR036291">
    <property type="entry name" value="NAD(P)-bd_dom_sf"/>
</dbReference>
<dbReference type="InterPro" id="IPR020904">
    <property type="entry name" value="Sc_DH/Rdtase_CS"/>
</dbReference>
<dbReference type="InterPro" id="IPR002347">
    <property type="entry name" value="SDR_fam"/>
</dbReference>
<dbReference type="NCBIfam" id="NF005309">
    <property type="entry name" value="PRK06841.1"/>
    <property type="match status" value="1"/>
</dbReference>
<dbReference type="NCBIfam" id="NF005559">
    <property type="entry name" value="PRK07231.1"/>
    <property type="match status" value="1"/>
</dbReference>
<dbReference type="PANTHER" id="PTHR42760:SF115">
    <property type="entry name" value="3-OXOACYL-[ACYL-CARRIER-PROTEIN] REDUCTASE FABG"/>
    <property type="match status" value="1"/>
</dbReference>
<dbReference type="PANTHER" id="PTHR42760">
    <property type="entry name" value="SHORT-CHAIN DEHYDROGENASES/REDUCTASES FAMILY MEMBER"/>
    <property type="match status" value="1"/>
</dbReference>
<dbReference type="Pfam" id="PF13561">
    <property type="entry name" value="adh_short_C2"/>
    <property type="match status" value="1"/>
</dbReference>
<dbReference type="PRINTS" id="PR00081">
    <property type="entry name" value="GDHRDH"/>
</dbReference>
<dbReference type="PRINTS" id="PR00080">
    <property type="entry name" value="SDRFAMILY"/>
</dbReference>
<dbReference type="SUPFAM" id="SSF51735">
    <property type="entry name" value="NAD(P)-binding Rossmann-fold domains"/>
    <property type="match status" value="1"/>
</dbReference>
<dbReference type="PROSITE" id="PS00061">
    <property type="entry name" value="ADH_SHORT"/>
    <property type="match status" value="1"/>
</dbReference>
<evidence type="ECO:0000250" key="1">
    <source>
        <dbReference type="UniProtKB" id="Q7Z4W1"/>
    </source>
</evidence>
<evidence type="ECO:0000255" key="2">
    <source>
        <dbReference type="PROSITE-ProRule" id="PRU10001"/>
    </source>
</evidence>
<evidence type="ECO:0000269" key="3">
    <source>
    </source>
</evidence>
<evidence type="ECO:0000303" key="4">
    <source>
    </source>
</evidence>
<evidence type="ECO:0000305" key="5"/>
<evidence type="ECO:0000305" key="6">
    <source>
    </source>
</evidence>
<evidence type="ECO:0000312" key="7">
    <source>
        <dbReference type="EMBL" id="CAC95595.1"/>
    </source>
</evidence>
<accession>Q92EU6</accession>
<gene>
    <name evidence="4" type="primary">golD</name>
    <name evidence="7" type="ordered locus">lin0362</name>
</gene>
<proteinExistence type="evidence at protein level"/>